<proteinExistence type="inferred from homology"/>
<feature type="chain" id="PRO_1000011216" description="Phosphopantetheine adenylyltransferase">
    <location>
        <begin position="1"/>
        <end position="164"/>
    </location>
</feature>
<feature type="binding site" evidence="1">
    <location>
        <begin position="9"/>
        <end position="10"/>
    </location>
    <ligand>
        <name>ATP</name>
        <dbReference type="ChEBI" id="CHEBI:30616"/>
    </ligand>
</feature>
<feature type="binding site" evidence="1">
    <location>
        <position position="9"/>
    </location>
    <ligand>
        <name>substrate</name>
    </ligand>
</feature>
<feature type="binding site" evidence="1">
    <location>
        <position position="17"/>
    </location>
    <ligand>
        <name>ATP</name>
        <dbReference type="ChEBI" id="CHEBI:30616"/>
    </ligand>
</feature>
<feature type="binding site" evidence="1">
    <location>
        <position position="41"/>
    </location>
    <ligand>
        <name>substrate</name>
    </ligand>
</feature>
<feature type="binding site" evidence="1">
    <location>
        <position position="78"/>
    </location>
    <ligand>
        <name>substrate</name>
    </ligand>
</feature>
<feature type="binding site" evidence="1">
    <location>
        <position position="92"/>
    </location>
    <ligand>
        <name>substrate</name>
    </ligand>
</feature>
<feature type="binding site" evidence="1">
    <location>
        <begin position="93"/>
        <end position="95"/>
    </location>
    <ligand>
        <name>ATP</name>
        <dbReference type="ChEBI" id="CHEBI:30616"/>
    </ligand>
</feature>
<feature type="binding site" evidence="1">
    <location>
        <position position="103"/>
    </location>
    <ligand>
        <name>ATP</name>
        <dbReference type="ChEBI" id="CHEBI:30616"/>
    </ligand>
</feature>
<feature type="binding site" evidence="1">
    <location>
        <begin position="128"/>
        <end position="134"/>
    </location>
    <ligand>
        <name>ATP</name>
        <dbReference type="ChEBI" id="CHEBI:30616"/>
    </ligand>
</feature>
<feature type="site" description="Transition state stabilizer" evidence="1">
    <location>
        <position position="17"/>
    </location>
</feature>
<keyword id="KW-0067">ATP-binding</keyword>
<keyword id="KW-0173">Coenzyme A biosynthesis</keyword>
<keyword id="KW-0963">Cytoplasm</keyword>
<keyword id="KW-0460">Magnesium</keyword>
<keyword id="KW-0547">Nucleotide-binding</keyword>
<keyword id="KW-0548">Nucleotidyltransferase</keyword>
<keyword id="KW-1185">Reference proteome</keyword>
<keyword id="KW-0808">Transferase</keyword>
<name>COAD_RHIEC</name>
<organism>
    <name type="scientific">Rhizobium etli (strain ATCC 51251 / DSM 11541 / JCM 21823 / NBRC 15573 / CFN 42)</name>
    <dbReference type="NCBI Taxonomy" id="347834"/>
    <lineage>
        <taxon>Bacteria</taxon>
        <taxon>Pseudomonadati</taxon>
        <taxon>Pseudomonadota</taxon>
        <taxon>Alphaproteobacteria</taxon>
        <taxon>Hyphomicrobiales</taxon>
        <taxon>Rhizobiaceae</taxon>
        <taxon>Rhizobium/Agrobacterium group</taxon>
        <taxon>Rhizobium</taxon>
    </lineage>
</organism>
<sequence>MTTAFYPGSFDPITNGHVDVLVQALNVAEKVIVAIGIHPGKAPLFSFEERAELIRLSLAEALPGKSANITVVAFDNLVVDAARAHGATLLIRGLRDGTDLDYEMQMAGMNRTMAPDIQTIFLPAGTASRPITATLVRQIAAMGGDVSAFVPAAVLQALTSKRKA</sequence>
<evidence type="ECO:0000255" key="1">
    <source>
        <dbReference type="HAMAP-Rule" id="MF_00151"/>
    </source>
</evidence>
<comment type="function">
    <text evidence="1">Reversibly transfers an adenylyl group from ATP to 4'-phosphopantetheine, yielding dephospho-CoA (dPCoA) and pyrophosphate.</text>
</comment>
<comment type="catalytic activity">
    <reaction evidence="1">
        <text>(R)-4'-phosphopantetheine + ATP + H(+) = 3'-dephospho-CoA + diphosphate</text>
        <dbReference type="Rhea" id="RHEA:19801"/>
        <dbReference type="ChEBI" id="CHEBI:15378"/>
        <dbReference type="ChEBI" id="CHEBI:30616"/>
        <dbReference type="ChEBI" id="CHEBI:33019"/>
        <dbReference type="ChEBI" id="CHEBI:57328"/>
        <dbReference type="ChEBI" id="CHEBI:61723"/>
        <dbReference type="EC" id="2.7.7.3"/>
    </reaction>
</comment>
<comment type="cofactor">
    <cofactor evidence="1">
        <name>Mg(2+)</name>
        <dbReference type="ChEBI" id="CHEBI:18420"/>
    </cofactor>
</comment>
<comment type="pathway">
    <text evidence="1">Cofactor biosynthesis; coenzyme A biosynthesis; CoA from (R)-pantothenate: step 4/5.</text>
</comment>
<comment type="subunit">
    <text evidence="1">Homohexamer.</text>
</comment>
<comment type="subcellular location">
    <subcellularLocation>
        <location evidence="1">Cytoplasm</location>
    </subcellularLocation>
</comment>
<comment type="similarity">
    <text evidence="1">Belongs to the bacterial CoaD family.</text>
</comment>
<gene>
    <name evidence="1" type="primary">coaD</name>
    <name type="ordered locus">RHE_CH02113</name>
</gene>
<dbReference type="EC" id="2.7.7.3" evidence="1"/>
<dbReference type="EMBL" id="CP000133">
    <property type="protein sequence ID" value="ABC90897.1"/>
    <property type="molecule type" value="Genomic_DNA"/>
</dbReference>
<dbReference type="RefSeq" id="WP_011425379.1">
    <property type="nucleotide sequence ID" value="NC_007761.1"/>
</dbReference>
<dbReference type="SMR" id="Q2K8D9"/>
<dbReference type="KEGG" id="ret:RHE_CH02113"/>
<dbReference type="eggNOG" id="COG0669">
    <property type="taxonomic scope" value="Bacteria"/>
</dbReference>
<dbReference type="HOGENOM" id="CLU_100149_0_1_5"/>
<dbReference type="OrthoDB" id="9806661at2"/>
<dbReference type="UniPathway" id="UPA00241">
    <property type="reaction ID" value="UER00355"/>
</dbReference>
<dbReference type="Proteomes" id="UP000001936">
    <property type="component" value="Chromosome"/>
</dbReference>
<dbReference type="GO" id="GO:0005737">
    <property type="term" value="C:cytoplasm"/>
    <property type="evidence" value="ECO:0007669"/>
    <property type="project" value="UniProtKB-SubCell"/>
</dbReference>
<dbReference type="GO" id="GO:0005524">
    <property type="term" value="F:ATP binding"/>
    <property type="evidence" value="ECO:0007669"/>
    <property type="project" value="UniProtKB-KW"/>
</dbReference>
<dbReference type="GO" id="GO:0004595">
    <property type="term" value="F:pantetheine-phosphate adenylyltransferase activity"/>
    <property type="evidence" value="ECO:0007669"/>
    <property type="project" value="UniProtKB-UniRule"/>
</dbReference>
<dbReference type="GO" id="GO:0015937">
    <property type="term" value="P:coenzyme A biosynthetic process"/>
    <property type="evidence" value="ECO:0007669"/>
    <property type="project" value="UniProtKB-UniRule"/>
</dbReference>
<dbReference type="CDD" id="cd02163">
    <property type="entry name" value="PPAT"/>
    <property type="match status" value="1"/>
</dbReference>
<dbReference type="Gene3D" id="3.40.50.620">
    <property type="entry name" value="HUPs"/>
    <property type="match status" value="1"/>
</dbReference>
<dbReference type="HAMAP" id="MF_00151">
    <property type="entry name" value="PPAT_bact"/>
    <property type="match status" value="1"/>
</dbReference>
<dbReference type="InterPro" id="IPR004821">
    <property type="entry name" value="Cyt_trans-like"/>
</dbReference>
<dbReference type="InterPro" id="IPR001980">
    <property type="entry name" value="PPAT"/>
</dbReference>
<dbReference type="InterPro" id="IPR014729">
    <property type="entry name" value="Rossmann-like_a/b/a_fold"/>
</dbReference>
<dbReference type="NCBIfam" id="TIGR01510">
    <property type="entry name" value="coaD_prev_kdtB"/>
    <property type="match status" value="1"/>
</dbReference>
<dbReference type="NCBIfam" id="TIGR00125">
    <property type="entry name" value="cyt_tran_rel"/>
    <property type="match status" value="1"/>
</dbReference>
<dbReference type="PANTHER" id="PTHR21342">
    <property type="entry name" value="PHOSPHOPANTETHEINE ADENYLYLTRANSFERASE"/>
    <property type="match status" value="1"/>
</dbReference>
<dbReference type="PANTHER" id="PTHR21342:SF1">
    <property type="entry name" value="PHOSPHOPANTETHEINE ADENYLYLTRANSFERASE"/>
    <property type="match status" value="1"/>
</dbReference>
<dbReference type="Pfam" id="PF01467">
    <property type="entry name" value="CTP_transf_like"/>
    <property type="match status" value="1"/>
</dbReference>
<dbReference type="PRINTS" id="PR01020">
    <property type="entry name" value="LPSBIOSNTHSS"/>
</dbReference>
<dbReference type="SUPFAM" id="SSF52374">
    <property type="entry name" value="Nucleotidylyl transferase"/>
    <property type="match status" value="1"/>
</dbReference>
<accession>Q2K8D9</accession>
<protein>
    <recommendedName>
        <fullName evidence="1">Phosphopantetheine adenylyltransferase</fullName>
        <ecNumber evidence="1">2.7.7.3</ecNumber>
    </recommendedName>
    <alternativeName>
        <fullName evidence="1">Dephospho-CoA pyrophosphorylase</fullName>
    </alternativeName>
    <alternativeName>
        <fullName evidence="1">Pantetheine-phosphate adenylyltransferase</fullName>
        <shortName evidence="1">PPAT</shortName>
    </alternativeName>
</protein>
<reference key="1">
    <citation type="journal article" date="2006" name="Proc. Natl. Acad. Sci. U.S.A.">
        <title>The partitioned Rhizobium etli genome: genetic and metabolic redundancy in seven interacting replicons.</title>
        <authorList>
            <person name="Gonzalez V."/>
            <person name="Santamaria R.I."/>
            <person name="Bustos P."/>
            <person name="Hernandez-Gonzalez I."/>
            <person name="Medrano-Soto A."/>
            <person name="Moreno-Hagelsieb G."/>
            <person name="Janga S.C."/>
            <person name="Ramirez M.A."/>
            <person name="Jimenez-Jacinto V."/>
            <person name="Collado-Vides J."/>
            <person name="Davila G."/>
        </authorList>
    </citation>
    <scope>NUCLEOTIDE SEQUENCE [LARGE SCALE GENOMIC DNA]</scope>
    <source>
        <strain>ATCC 51251 / DSM 11541 / JCM 21823 / NBRC 15573 / CFN 42</strain>
    </source>
</reference>